<reference key="1">
    <citation type="journal article" date="1996" name="Science">
        <title>Complete genome sequence of the methanogenic archaeon, Methanococcus jannaschii.</title>
        <authorList>
            <person name="Bult C.J."/>
            <person name="White O."/>
            <person name="Olsen G.J."/>
            <person name="Zhou L."/>
            <person name="Fleischmann R.D."/>
            <person name="Sutton G.G."/>
            <person name="Blake J.A."/>
            <person name="FitzGerald L.M."/>
            <person name="Clayton R.A."/>
            <person name="Gocayne J.D."/>
            <person name="Kerlavage A.R."/>
            <person name="Dougherty B.A."/>
            <person name="Tomb J.-F."/>
            <person name="Adams M.D."/>
            <person name="Reich C.I."/>
            <person name="Overbeek R."/>
            <person name="Kirkness E.F."/>
            <person name="Weinstock K.G."/>
            <person name="Merrick J.M."/>
            <person name="Glodek A."/>
            <person name="Scott J.L."/>
            <person name="Geoghagen N.S.M."/>
            <person name="Weidman J.F."/>
            <person name="Fuhrmann J.L."/>
            <person name="Nguyen D."/>
            <person name="Utterback T.R."/>
            <person name="Kelley J.M."/>
            <person name="Peterson J.D."/>
            <person name="Sadow P.W."/>
            <person name="Hanna M.C."/>
            <person name="Cotton M.D."/>
            <person name="Roberts K.M."/>
            <person name="Hurst M.A."/>
            <person name="Kaine B.P."/>
            <person name="Borodovsky M."/>
            <person name="Klenk H.-P."/>
            <person name="Fraser C.M."/>
            <person name="Smith H.O."/>
            <person name="Woese C.R."/>
            <person name="Venter J.C."/>
        </authorList>
    </citation>
    <scope>NUCLEOTIDE SEQUENCE [LARGE SCALE GENOMIC DNA]</scope>
    <source>
        <strain>ATCC 43067 / DSM 2661 / JAL-1 / JCM 10045 / NBRC 100440</strain>
    </source>
</reference>
<dbReference type="EC" id="2.1.1.216" evidence="1"/>
<dbReference type="EMBL" id="L77117">
    <property type="protein sequence ID" value="AAB98948.1"/>
    <property type="molecule type" value="Genomic_DNA"/>
</dbReference>
<dbReference type="PIR" id="B64418">
    <property type="entry name" value="B64418"/>
</dbReference>
<dbReference type="RefSeq" id="WP_010870460.1">
    <property type="nucleotide sequence ID" value="NC_000909.1"/>
</dbReference>
<dbReference type="SMR" id="Q58356"/>
<dbReference type="FunCoup" id="Q58356">
    <property type="interactions" value="215"/>
</dbReference>
<dbReference type="STRING" id="243232.MJ_0946"/>
<dbReference type="PaxDb" id="243232-MJ_0946"/>
<dbReference type="EnsemblBacteria" id="AAB98948">
    <property type="protein sequence ID" value="AAB98948"/>
    <property type="gene ID" value="MJ_0946"/>
</dbReference>
<dbReference type="GeneID" id="1451843"/>
<dbReference type="KEGG" id="mja:MJ_0946"/>
<dbReference type="eggNOG" id="arCOG01219">
    <property type="taxonomic scope" value="Archaea"/>
</dbReference>
<dbReference type="HOGENOM" id="CLU_010862_5_1_2"/>
<dbReference type="InParanoid" id="Q58356"/>
<dbReference type="OrthoDB" id="372177at2157"/>
<dbReference type="PhylomeDB" id="Q58356"/>
<dbReference type="Proteomes" id="UP000000805">
    <property type="component" value="Chromosome"/>
</dbReference>
<dbReference type="GO" id="GO:0160104">
    <property type="term" value="F:tRNA (guanine(26)-N2)-dimethyltransferase activity"/>
    <property type="evidence" value="ECO:0007669"/>
    <property type="project" value="UniProtKB-UniRule"/>
</dbReference>
<dbReference type="GO" id="GO:0000049">
    <property type="term" value="F:tRNA binding"/>
    <property type="evidence" value="ECO:0007669"/>
    <property type="project" value="UniProtKB-KW"/>
</dbReference>
<dbReference type="GO" id="GO:0002940">
    <property type="term" value="P:tRNA N2-guanine methylation"/>
    <property type="evidence" value="ECO:0000318"/>
    <property type="project" value="GO_Central"/>
</dbReference>
<dbReference type="CDD" id="cd02440">
    <property type="entry name" value="AdoMet_MTases"/>
    <property type="match status" value="1"/>
</dbReference>
<dbReference type="FunFam" id="3.40.50.150:FF:000272">
    <property type="entry name" value="tRNA (guanine(26)-N(2))-dimethyltransferase"/>
    <property type="match status" value="1"/>
</dbReference>
<dbReference type="Gene3D" id="3.30.56.70">
    <property type="entry name" value="N2,N2-dimethylguanosine tRNA methyltransferase, C-terminal domain"/>
    <property type="match status" value="1"/>
</dbReference>
<dbReference type="Gene3D" id="3.40.50.150">
    <property type="entry name" value="Vaccinia Virus protein VP39"/>
    <property type="match status" value="1"/>
</dbReference>
<dbReference type="HAMAP" id="MF_00290">
    <property type="entry name" value="tRNA_dimethyltr_TRM1"/>
    <property type="match status" value="1"/>
</dbReference>
<dbReference type="InterPro" id="IPR029063">
    <property type="entry name" value="SAM-dependent_MTases_sf"/>
</dbReference>
<dbReference type="InterPro" id="IPR002905">
    <property type="entry name" value="Trm1"/>
</dbReference>
<dbReference type="InterPro" id="IPR022923">
    <property type="entry name" value="TRM1_arc_bac"/>
</dbReference>
<dbReference type="InterPro" id="IPR042296">
    <property type="entry name" value="tRNA_met_Trm1_C"/>
</dbReference>
<dbReference type="NCBIfam" id="TIGR00308">
    <property type="entry name" value="TRM1"/>
    <property type="match status" value="1"/>
</dbReference>
<dbReference type="PANTHER" id="PTHR10631">
    <property type="entry name" value="N 2 ,N 2 -DIMETHYLGUANOSINE TRNA METHYLTRANSFERASE"/>
    <property type="match status" value="1"/>
</dbReference>
<dbReference type="PANTHER" id="PTHR10631:SF3">
    <property type="entry name" value="TRNA (GUANINE(26)-N(2))-DIMETHYLTRANSFERASE"/>
    <property type="match status" value="1"/>
</dbReference>
<dbReference type="Pfam" id="PF02005">
    <property type="entry name" value="TRM"/>
    <property type="match status" value="1"/>
</dbReference>
<dbReference type="SUPFAM" id="SSF53335">
    <property type="entry name" value="S-adenosyl-L-methionine-dependent methyltransferases"/>
    <property type="match status" value="1"/>
</dbReference>
<dbReference type="PROSITE" id="PS51626">
    <property type="entry name" value="SAM_MT_TRM1"/>
    <property type="match status" value="1"/>
</dbReference>
<accession>Q58356</accession>
<feature type="chain" id="PRO_0000147683" description="tRNA (guanine(26)-N(2))-dimethyltransferase">
    <location>
        <begin position="1"/>
        <end position="374"/>
    </location>
</feature>
<feature type="domain" description="Trm1 methyltransferase" evidence="1">
    <location>
        <begin position="1"/>
        <end position="367"/>
    </location>
</feature>
<feature type="binding site" evidence="1">
    <location>
        <position position="34"/>
    </location>
    <ligand>
        <name>S-adenosyl-L-methionine</name>
        <dbReference type="ChEBI" id="CHEBI:59789"/>
    </ligand>
</feature>
<feature type="binding site" evidence="1">
    <location>
        <position position="66"/>
    </location>
    <ligand>
        <name>S-adenosyl-L-methionine</name>
        <dbReference type="ChEBI" id="CHEBI:59789"/>
    </ligand>
</feature>
<feature type="binding site" evidence="1">
    <location>
        <position position="86"/>
    </location>
    <ligand>
        <name>S-adenosyl-L-methionine</name>
        <dbReference type="ChEBI" id="CHEBI:59789"/>
    </ligand>
</feature>
<feature type="binding site" evidence="1">
    <location>
        <position position="113"/>
    </location>
    <ligand>
        <name>S-adenosyl-L-methionine</name>
        <dbReference type="ChEBI" id="CHEBI:59789"/>
    </ligand>
</feature>
<feature type="binding site" evidence="1">
    <location>
        <position position="114"/>
    </location>
    <ligand>
        <name>S-adenosyl-L-methionine</name>
        <dbReference type="ChEBI" id="CHEBI:59789"/>
    </ligand>
</feature>
<proteinExistence type="inferred from homology"/>
<protein>
    <recommendedName>
        <fullName evidence="1">tRNA (guanine(26)-N(2))-dimethyltransferase</fullName>
        <ecNumber evidence="1">2.1.1.216</ecNumber>
    </recommendedName>
    <alternativeName>
        <fullName evidence="1">tRNA 2,2-dimethylguanosine-26 methyltransferase</fullName>
    </alternativeName>
    <alternativeName>
        <fullName evidence="1">tRNA(guanine-26,N(2)-N(2)) methyltransferase</fullName>
    </alternativeName>
    <alternativeName>
        <fullName evidence="1">tRNA(m(2,2)G26)dimethyltransferase</fullName>
    </alternativeName>
</protein>
<evidence type="ECO:0000255" key="1">
    <source>
        <dbReference type="HAMAP-Rule" id="MF_00290"/>
    </source>
</evidence>
<comment type="function">
    <text evidence="1">Dimethylates a single guanine residue at position 26 of a number of tRNAs using S-adenosyl-L-methionine as donor of the methyl groups.</text>
</comment>
<comment type="catalytic activity">
    <reaction evidence="1">
        <text>guanosine(26) in tRNA + 2 S-adenosyl-L-methionine = N(2)-dimethylguanosine(26) in tRNA + 2 S-adenosyl-L-homocysteine + 2 H(+)</text>
        <dbReference type="Rhea" id="RHEA:43140"/>
        <dbReference type="Rhea" id="RHEA-COMP:10359"/>
        <dbReference type="Rhea" id="RHEA-COMP:10360"/>
        <dbReference type="ChEBI" id="CHEBI:15378"/>
        <dbReference type="ChEBI" id="CHEBI:57856"/>
        <dbReference type="ChEBI" id="CHEBI:59789"/>
        <dbReference type="ChEBI" id="CHEBI:74269"/>
        <dbReference type="ChEBI" id="CHEBI:74513"/>
        <dbReference type="EC" id="2.1.1.216"/>
    </reaction>
</comment>
<comment type="similarity">
    <text evidence="1">Belongs to the class I-like SAM-binding methyltransferase superfamily. Trm1 family.</text>
</comment>
<organism>
    <name type="scientific">Methanocaldococcus jannaschii (strain ATCC 43067 / DSM 2661 / JAL-1 / JCM 10045 / NBRC 100440)</name>
    <name type="common">Methanococcus jannaschii</name>
    <dbReference type="NCBI Taxonomy" id="243232"/>
    <lineage>
        <taxon>Archaea</taxon>
        <taxon>Methanobacteriati</taxon>
        <taxon>Methanobacteriota</taxon>
        <taxon>Methanomada group</taxon>
        <taxon>Methanococci</taxon>
        <taxon>Methanococcales</taxon>
        <taxon>Methanocaldococcaceae</taxon>
        <taxon>Methanocaldococcus</taxon>
    </lineage>
</organism>
<keyword id="KW-0489">Methyltransferase</keyword>
<keyword id="KW-1185">Reference proteome</keyword>
<keyword id="KW-0694">RNA-binding</keyword>
<keyword id="KW-0949">S-adenosyl-L-methionine</keyword>
<keyword id="KW-0808">Transferase</keyword>
<keyword id="KW-0819">tRNA processing</keyword>
<keyword id="KW-0820">tRNA-binding</keyword>
<sequence length="374" mass="42588">MILKEGEVVFEVPDKLTVTKKDEVFYNPRMKTCRDISIAVIQAFLNLYHKRDKFYIADALAGSGIRGLRYAKELEFNGELKVFLNDINPKAYEKIINNAKLNEIENIDVFNEDANTFLSKHFRFFNVVDIDPFGSPAPYVEQAIRALVTRNGLLCLTATDTAALCGRSKKSCLRKYLAYPLFGRDCHEFALRVLVGYVMRMATKYELALKPVFCHATDHYVRVYLVTDRGAKRADKVFEMLGYVKDVNGIKIIKKFEEGYEKGFAGPLYIGNLYDKALVEEALKIAEKREFSERVLKILNAIKGESAINQVGCYDTHQIGKMLKISVPPMQDIINKLKEMGFNAVVTHYNPKGIKTDATLKNVIEAIYQCTKIR</sequence>
<name>TRM1_METJA</name>
<gene>
    <name evidence="1" type="primary">trm1</name>
    <name type="ordered locus">MJ0946</name>
</gene>